<evidence type="ECO:0000255" key="1">
    <source>
        <dbReference type="HAMAP-Rule" id="MF_00001"/>
    </source>
</evidence>
<sequence>MHAASAFTLSGRDLLGIEGLIASEITGLLDLAEEFVELNRQIEKKRTTLRGRTQINLFSEASTRTQSSFEIAGKRLGADVMNMSVGSSSVKKGETLIDTAITLNAMHPDILVVRHHASGAVALLARKVDCCVVNAGDGAHEHPTQALLDALTIRRNKGRIAGLTVAICGDVLHSRVARSNIILLHTLGAKVRLVAPSTLLPAGIESLGVEVFRTMEEGLKDADIVMMLRLQRERMAGSFIPSVKEYFHYFGLDEAKLRHAAPDALVMHPGPMNRGVEIDSAVADGPRSLIREQVEMGVAVRMAVLDTLARKLPNA</sequence>
<keyword id="KW-0665">Pyrimidine biosynthesis</keyword>
<keyword id="KW-1185">Reference proteome</keyword>
<keyword id="KW-0808">Transferase</keyword>
<protein>
    <recommendedName>
        <fullName evidence="1">Aspartate carbamoyltransferase catalytic subunit</fullName>
        <ecNumber evidence="1">2.1.3.2</ecNumber>
    </recommendedName>
    <alternativeName>
        <fullName evidence="1">Aspartate transcarbamylase</fullName>
        <shortName evidence="1">ATCase</shortName>
    </alternativeName>
</protein>
<reference key="1">
    <citation type="submission" date="2007-07" db="EMBL/GenBank/DDBJ databases">
        <title>Complete sequence of chromosome of Xanthobacter autotrophicus Py2.</title>
        <authorList>
            <consortium name="US DOE Joint Genome Institute"/>
            <person name="Copeland A."/>
            <person name="Lucas S."/>
            <person name="Lapidus A."/>
            <person name="Barry K."/>
            <person name="Glavina del Rio T."/>
            <person name="Hammon N."/>
            <person name="Israni S."/>
            <person name="Dalin E."/>
            <person name="Tice H."/>
            <person name="Pitluck S."/>
            <person name="Sims D."/>
            <person name="Brettin T."/>
            <person name="Bruce D."/>
            <person name="Detter J.C."/>
            <person name="Han C."/>
            <person name="Tapia R."/>
            <person name="Brainard J."/>
            <person name="Schmutz J."/>
            <person name="Larimer F."/>
            <person name="Land M."/>
            <person name="Hauser L."/>
            <person name="Kyrpides N."/>
            <person name="Kim E."/>
            <person name="Ensigns S.A."/>
            <person name="Richardson P."/>
        </authorList>
    </citation>
    <scope>NUCLEOTIDE SEQUENCE [LARGE SCALE GENOMIC DNA]</scope>
    <source>
        <strain>ATCC BAA-1158 / Py2</strain>
    </source>
</reference>
<organism>
    <name type="scientific">Xanthobacter autotrophicus (strain ATCC BAA-1158 / Py2)</name>
    <dbReference type="NCBI Taxonomy" id="78245"/>
    <lineage>
        <taxon>Bacteria</taxon>
        <taxon>Pseudomonadati</taxon>
        <taxon>Pseudomonadota</taxon>
        <taxon>Alphaproteobacteria</taxon>
        <taxon>Hyphomicrobiales</taxon>
        <taxon>Xanthobacteraceae</taxon>
        <taxon>Xanthobacter</taxon>
    </lineage>
</organism>
<name>PYRB_XANP2</name>
<dbReference type="EC" id="2.1.3.2" evidence="1"/>
<dbReference type="EMBL" id="CP000781">
    <property type="protein sequence ID" value="ABS69143.1"/>
    <property type="molecule type" value="Genomic_DNA"/>
</dbReference>
<dbReference type="SMR" id="A7IMA0"/>
<dbReference type="STRING" id="78245.Xaut_3919"/>
<dbReference type="KEGG" id="xau:Xaut_3919"/>
<dbReference type="eggNOG" id="COG0540">
    <property type="taxonomic scope" value="Bacteria"/>
</dbReference>
<dbReference type="HOGENOM" id="CLU_043846_2_0_5"/>
<dbReference type="OrthoDB" id="9774690at2"/>
<dbReference type="PhylomeDB" id="A7IMA0"/>
<dbReference type="UniPathway" id="UPA00070">
    <property type="reaction ID" value="UER00116"/>
</dbReference>
<dbReference type="Proteomes" id="UP000002417">
    <property type="component" value="Chromosome"/>
</dbReference>
<dbReference type="GO" id="GO:0005829">
    <property type="term" value="C:cytosol"/>
    <property type="evidence" value="ECO:0007669"/>
    <property type="project" value="TreeGrafter"/>
</dbReference>
<dbReference type="GO" id="GO:0016597">
    <property type="term" value="F:amino acid binding"/>
    <property type="evidence" value="ECO:0007669"/>
    <property type="project" value="InterPro"/>
</dbReference>
<dbReference type="GO" id="GO:0004070">
    <property type="term" value="F:aspartate carbamoyltransferase activity"/>
    <property type="evidence" value="ECO:0007669"/>
    <property type="project" value="UniProtKB-UniRule"/>
</dbReference>
<dbReference type="GO" id="GO:0006207">
    <property type="term" value="P:'de novo' pyrimidine nucleobase biosynthetic process"/>
    <property type="evidence" value="ECO:0007669"/>
    <property type="project" value="InterPro"/>
</dbReference>
<dbReference type="GO" id="GO:0044205">
    <property type="term" value="P:'de novo' UMP biosynthetic process"/>
    <property type="evidence" value="ECO:0007669"/>
    <property type="project" value="UniProtKB-UniRule"/>
</dbReference>
<dbReference type="GO" id="GO:0006520">
    <property type="term" value="P:amino acid metabolic process"/>
    <property type="evidence" value="ECO:0007669"/>
    <property type="project" value="InterPro"/>
</dbReference>
<dbReference type="FunFam" id="3.40.50.1370:FF:000007">
    <property type="entry name" value="Aspartate carbamoyltransferase"/>
    <property type="match status" value="1"/>
</dbReference>
<dbReference type="Gene3D" id="3.40.50.1370">
    <property type="entry name" value="Aspartate/ornithine carbamoyltransferase"/>
    <property type="match status" value="2"/>
</dbReference>
<dbReference type="HAMAP" id="MF_00001">
    <property type="entry name" value="Asp_carb_tr"/>
    <property type="match status" value="1"/>
</dbReference>
<dbReference type="InterPro" id="IPR006132">
    <property type="entry name" value="Asp/Orn_carbamoyltranf_P-bd"/>
</dbReference>
<dbReference type="InterPro" id="IPR006130">
    <property type="entry name" value="Asp/Orn_carbamoylTrfase"/>
</dbReference>
<dbReference type="InterPro" id="IPR036901">
    <property type="entry name" value="Asp/Orn_carbamoylTrfase_sf"/>
</dbReference>
<dbReference type="InterPro" id="IPR002082">
    <property type="entry name" value="Asp_carbamoyltransf"/>
</dbReference>
<dbReference type="InterPro" id="IPR006131">
    <property type="entry name" value="Asp_carbamoyltransf_Asp/Orn-bd"/>
</dbReference>
<dbReference type="NCBIfam" id="TIGR00670">
    <property type="entry name" value="asp_carb_tr"/>
    <property type="match status" value="1"/>
</dbReference>
<dbReference type="NCBIfam" id="NF002032">
    <property type="entry name" value="PRK00856.1"/>
    <property type="match status" value="1"/>
</dbReference>
<dbReference type="PANTHER" id="PTHR45753:SF6">
    <property type="entry name" value="ASPARTATE CARBAMOYLTRANSFERASE"/>
    <property type="match status" value="1"/>
</dbReference>
<dbReference type="PANTHER" id="PTHR45753">
    <property type="entry name" value="ORNITHINE CARBAMOYLTRANSFERASE, MITOCHONDRIAL"/>
    <property type="match status" value="1"/>
</dbReference>
<dbReference type="Pfam" id="PF00185">
    <property type="entry name" value="OTCace"/>
    <property type="match status" value="1"/>
</dbReference>
<dbReference type="Pfam" id="PF02729">
    <property type="entry name" value="OTCace_N"/>
    <property type="match status" value="1"/>
</dbReference>
<dbReference type="PRINTS" id="PR00100">
    <property type="entry name" value="AOTCASE"/>
</dbReference>
<dbReference type="PRINTS" id="PR00101">
    <property type="entry name" value="ATCASE"/>
</dbReference>
<dbReference type="SUPFAM" id="SSF53671">
    <property type="entry name" value="Aspartate/ornithine carbamoyltransferase"/>
    <property type="match status" value="1"/>
</dbReference>
<dbReference type="PROSITE" id="PS00097">
    <property type="entry name" value="CARBAMOYLTRANSFERASE"/>
    <property type="match status" value="1"/>
</dbReference>
<proteinExistence type="inferred from homology"/>
<feature type="chain" id="PRO_1000088816" description="Aspartate carbamoyltransferase catalytic subunit">
    <location>
        <begin position="1"/>
        <end position="315"/>
    </location>
</feature>
<feature type="binding site" evidence="1">
    <location>
        <position position="64"/>
    </location>
    <ligand>
        <name>carbamoyl phosphate</name>
        <dbReference type="ChEBI" id="CHEBI:58228"/>
    </ligand>
</feature>
<feature type="binding site" evidence="1">
    <location>
        <position position="65"/>
    </location>
    <ligand>
        <name>carbamoyl phosphate</name>
        <dbReference type="ChEBI" id="CHEBI:58228"/>
    </ligand>
</feature>
<feature type="binding site" evidence="1">
    <location>
        <position position="92"/>
    </location>
    <ligand>
        <name>L-aspartate</name>
        <dbReference type="ChEBI" id="CHEBI:29991"/>
    </ligand>
</feature>
<feature type="binding site" evidence="1">
    <location>
        <position position="114"/>
    </location>
    <ligand>
        <name>carbamoyl phosphate</name>
        <dbReference type="ChEBI" id="CHEBI:58228"/>
    </ligand>
</feature>
<feature type="binding site" evidence="1">
    <location>
        <position position="142"/>
    </location>
    <ligand>
        <name>carbamoyl phosphate</name>
        <dbReference type="ChEBI" id="CHEBI:58228"/>
    </ligand>
</feature>
<feature type="binding site" evidence="1">
    <location>
        <position position="145"/>
    </location>
    <ligand>
        <name>carbamoyl phosphate</name>
        <dbReference type="ChEBI" id="CHEBI:58228"/>
    </ligand>
</feature>
<feature type="binding site" evidence="1">
    <location>
        <position position="175"/>
    </location>
    <ligand>
        <name>L-aspartate</name>
        <dbReference type="ChEBI" id="CHEBI:29991"/>
    </ligand>
</feature>
<feature type="binding site" evidence="1">
    <location>
        <position position="229"/>
    </location>
    <ligand>
        <name>L-aspartate</name>
        <dbReference type="ChEBI" id="CHEBI:29991"/>
    </ligand>
</feature>
<feature type="binding site" evidence="1">
    <location>
        <position position="270"/>
    </location>
    <ligand>
        <name>carbamoyl phosphate</name>
        <dbReference type="ChEBI" id="CHEBI:58228"/>
    </ligand>
</feature>
<feature type="binding site" evidence="1">
    <location>
        <position position="271"/>
    </location>
    <ligand>
        <name>carbamoyl phosphate</name>
        <dbReference type="ChEBI" id="CHEBI:58228"/>
    </ligand>
</feature>
<gene>
    <name evidence="1" type="primary">pyrB</name>
    <name type="ordered locus">Xaut_3919</name>
</gene>
<accession>A7IMA0</accession>
<comment type="function">
    <text evidence="1">Catalyzes the condensation of carbamoyl phosphate and aspartate to form carbamoyl aspartate and inorganic phosphate, the committed step in the de novo pyrimidine nucleotide biosynthesis pathway.</text>
</comment>
<comment type="catalytic activity">
    <reaction evidence="1">
        <text>carbamoyl phosphate + L-aspartate = N-carbamoyl-L-aspartate + phosphate + H(+)</text>
        <dbReference type="Rhea" id="RHEA:20013"/>
        <dbReference type="ChEBI" id="CHEBI:15378"/>
        <dbReference type="ChEBI" id="CHEBI:29991"/>
        <dbReference type="ChEBI" id="CHEBI:32814"/>
        <dbReference type="ChEBI" id="CHEBI:43474"/>
        <dbReference type="ChEBI" id="CHEBI:58228"/>
        <dbReference type="EC" id="2.1.3.2"/>
    </reaction>
</comment>
<comment type="pathway">
    <text evidence="1">Pyrimidine metabolism; UMP biosynthesis via de novo pathway; (S)-dihydroorotate from bicarbonate: step 2/3.</text>
</comment>
<comment type="subunit">
    <text evidence="1">Heterododecamer (2C3:3R2) of six catalytic PyrB chains organized as two trimers (C3), and six regulatory PyrI chains organized as three dimers (R2).</text>
</comment>
<comment type="similarity">
    <text evidence="1">Belongs to the aspartate/ornithine carbamoyltransferase superfamily. ATCase family.</text>
</comment>